<protein>
    <recommendedName>
        <fullName evidence="3">Ascochitine biosynthesis cluster transcriptional regulator</fullName>
    </recommendedName>
    <alternativeName>
        <fullName evidence="3">Ascochitine biosynthesis cluster protein 11</fullName>
    </alternativeName>
</protein>
<sequence>MAALRKRIAELEGRLASQEPAEREEHEEVTHNILDFPGDDHLPDWNDFNNMSLPTSNNTSVGDTETSFSNFIASTTAQSMPMTMASLTSTPVTTASLTTAALMPVVPLTPATTVSIATPQLHTLSGFIPAELDQLYFERVHPAIPLLHQRTYLSWSRKDIKKKSQLCLQHAMWTLAALQSAQYRYLQETLYRSCTQMLTSICLSDSGQDPFDTEQIQAWLLITVYELMRSFHRQAWMSVGRAFRLLQLLRYHELDNPALGIPAGQDFIEREEQRRAFWMAYVLDHLFGVSNNWPITLNELVVCTRLPAFEEDFQSERPVLGSFLSEAITEQTPRYLSAFNETIIFATLCGRRLFYGQQFHVRSAYGDMYSNWSNSTLMLDNILRQRVDILSQCYPPLDEASGPMMHFVSTMAQCSIIYSCTGADMMLRVDEGNAAMQTEYALRAATAAEHVIRLAQMLTRCFVFKVLSFSPPSFTTQHRHTSEKKYTLTRRQQIHPLASIPLMLCAEFLFKNQNVSEKFATLLERLLKEFEQIRDIEDPAQSYIDVMKRWQCSAKNSDRQQRQPSVDSAALSA</sequence>
<organism>
    <name type="scientific">Didymella fabae</name>
    <name type="common">Leaf and pod spot disease fungus</name>
    <name type="synonym">Ascochyta fabae</name>
    <dbReference type="NCBI Taxonomy" id="372025"/>
    <lineage>
        <taxon>Eukaryota</taxon>
        <taxon>Fungi</taxon>
        <taxon>Dikarya</taxon>
        <taxon>Ascomycota</taxon>
        <taxon>Pezizomycotina</taxon>
        <taxon>Dothideomycetes</taxon>
        <taxon>Pleosporomycetidae</taxon>
        <taxon>Pleosporales</taxon>
        <taxon>Pleosporineae</taxon>
        <taxon>Didymellaceae</taxon>
        <taxon>Ascochyta</taxon>
    </lineage>
</organism>
<accession>A0A5C1RF03</accession>
<evidence type="ECO:0000255" key="1"/>
<evidence type="ECO:0000269" key="2">
    <source>
    </source>
</evidence>
<evidence type="ECO:0000303" key="3">
    <source>
    </source>
</evidence>
<evidence type="ECO:0000305" key="4">
    <source>
    </source>
</evidence>
<keyword id="KW-0238">DNA-binding</keyword>
<keyword id="KW-0479">Metal-binding</keyword>
<keyword id="KW-0539">Nucleus</keyword>
<keyword id="KW-0804">Transcription</keyword>
<keyword id="KW-0805">Transcription regulation</keyword>
<keyword id="KW-0843">Virulence</keyword>
<keyword id="KW-0862">Zinc</keyword>
<comment type="function">
    <text evidence="4">Transcription factor that regulates the expression of the gene cluster that mediates the biosynthesis of the mycotoxin ascochitine, an o-quinone methide that plays a possible protective role against other microbial competitors in nature and is considered to be important for pathogenicity of legume-associated Didymella species.</text>
</comment>
<comment type="subcellular location">
    <subcellularLocation>
        <location evidence="1">Nucleus</location>
    </subcellularLocation>
</comment>
<comment type="caution">
    <text evidence="2">The deduced amino acid sequence of the orf11 gene lacks a DNA-binding domain and contains only the conserved domain (termed 'middle homology region') that is commonly found in Zn(II)2Cys6-type transcription factors.</text>
</comment>
<proteinExistence type="inferred from homology"/>
<name>ASC11_DIDFA</name>
<gene>
    <name evidence="3" type="ORF">orf11</name>
</gene>
<feature type="chain" id="PRO_0000448996" description="Ascochitine biosynthesis cluster transcriptional regulator">
    <location>
        <begin position="1"/>
        <end position="573"/>
    </location>
</feature>
<dbReference type="EMBL" id="MN052632">
    <property type="protein sequence ID" value="QEN17979.1"/>
    <property type="molecule type" value="Genomic_DNA"/>
</dbReference>
<dbReference type="GO" id="GO:0005634">
    <property type="term" value="C:nucleus"/>
    <property type="evidence" value="ECO:0007669"/>
    <property type="project" value="UniProtKB-SubCell"/>
</dbReference>
<dbReference type="GO" id="GO:0003677">
    <property type="term" value="F:DNA binding"/>
    <property type="evidence" value="ECO:0007669"/>
    <property type="project" value="UniProtKB-KW"/>
</dbReference>
<dbReference type="GO" id="GO:0000981">
    <property type="term" value="F:DNA-binding transcription factor activity, RNA polymerase II-specific"/>
    <property type="evidence" value="ECO:0007669"/>
    <property type="project" value="InterPro"/>
</dbReference>
<dbReference type="GO" id="GO:0008270">
    <property type="term" value="F:zinc ion binding"/>
    <property type="evidence" value="ECO:0007669"/>
    <property type="project" value="InterPro"/>
</dbReference>
<dbReference type="GO" id="GO:0006351">
    <property type="term" value="P:DNA-templated transcription"/>
    <property type="evidence" value="ECO:0007669"/>
    <property type="project" value="InterPro"/>
</dbReference>
<dbReference type="CDD" id="cd12148">
    <property type="entry name" value="fungal_TF_MHR"/>
    <property type="match status" value="1"/>
</dbReference>
<dbReference type="InterPro" id="IPR050815">
    <property type="entry name" value="TF_fung"/>
</dbReference>
<dbReference type="InterPro" id="IPR007219">
    <property type="entry name" value="Transcription_factor_dom_fun"/>
</dbReference>
<dbReference type="PANTHER" id="PTHR47338:SF3">
    <property type="entry name" value="C6 FINGER DOMAIN TRANSCRIPTION FACTOR DBAA-RELATED"/>
    <property type="match status" value="1"/>
</dbReference>
<dbReference type="PANTHER" id="PTHR47338">
    <property type="entry name" value="ZN(II)2CYS6 TRANSCRIPTION FACTOR (EUROFUNG)-RELATED"/>
    <property type="match status" value="1"/>
</dbReference>
<dbReference type="Pfam" id="PF04082">
    <property type="entry name" value="Fungal_trans"/>
    <property type="match status" value="1"/>
</dbReference>
<dbReference type="SMART" id="SM00906">
    <property type="entry name" value="Fungal_trans"/>
    <property type="match status" value="1"/>
</dbReference>
<reference key="1">
    <citation type="journal article" date="2019" name="MSphere">
        <title>Identification of a polyketide synthase gene responsible for ascochitine biosynthesis in Ascochyta fabae and its abrogation in sister taxa.</title>
        <authorList>
            <person name="Kim W."/>
            <person name="Lichtenzveig J."/>
            <person name="Syme R.A."/>
            <person name="Williams A.H."/>
            <person name="Peever T.L."/>
            <person name="Chen W."/>
        </authorList>
    </citation>
    <scope>NUCLEOTIDE SEQUENCE [GENOMIC DNA]</scope>
    <scope>FUNCTION</scope>
    <source>
        <strain>AF247/15</strain>
    </source>
</reference>